<evidence type="ECO:0000255" key="1"/>
<evidence type="ECO:0000255" key="2">
    <source>
        <dbReference type="PROSITE-ProRule" id="PRU00283"/>
    </source>
</evidence>
<evidence type="ECO:0000256" key="3">
    <source>
        <dbReference type="SAM" id="MobiDB-lite"/>
    </source>
</evidence>
<evidence type="ECO:0000269" key="4">
    <source>
    </source>
</evidence>
<evidence type="ECO:0000269" key="5">
    <source>
    </source>
</evidence>
<evidence type="ECO:0000269" key="6">
    <source>
    </source>
</evidence>
<evidence type="ECO:0000269" key="7">
    <source>
    </source>
</evidence>
<evidence type="ECO:0000305" key="8"/>
<evidence type="ECO:0000305" key="9">
    <source>
    </source>
</evidence>
<accession>Q9I869</accession>
<accession>Q9I8K0</accession>
<feature type="chain" id="PRO_0000347238" description="Kinesin-like protein KIF22-A">
    <location>
        <begin position="1"/>
        <end position="651"/>
    </location>
</feature>
<feature type="domain" description="Kinesin motor" evidence="2">
    <location>
        <begin position="31"/>
        <end position="359"/>
    </location>
</feature>
<feature type="region of interest" description="Disordered" evidence="3">
    <location>
        <begin position="366"/>
        <end position="413"/>
    </location>
</feature>
<feature type="coiled-coil region" evidence="1">
    <location>
        <begin position="452"/>
        <end position="498"/>
    </location>
</feature>
<feature type="short sequence motif" description="Important for regulated proteolytic degradation">
    <location>
        <begin position="561"/>
        <end position="564"/>
    </location>
</feature>
<feature type="compositionally biased region" description="Polar residues" evidence="3">
    <location>
        <begin position="401"/>
        <end position="410"/>
    </location>
</feature>
<feature type="binding site" evidence="2">
    <location>
        <begin position="116"/>
        <end position="123"/>
    </location>
    <ligand>
        <name>ATP</name>
        <dbReference type="ChEBI" id="CHEBI:30616"/>
    </ligand>
</feature>
<feature type="mutagenesis site" description="Reduces regulated proteolytic degradation." evidence="7">
    <original>G</original>
    <variation>A</variation>
    <location>
        <position position="561"/>
    </location>
</feature>
<feature type="mutagenesis site" description="No effect." evidence="7">
    <original>L</original>
    <variation>A</variation>
    <location>
        <position position="562"/>
    </location>
</feature>
<feature type="mutagenesis site" description="Reduces regulated proteolytic degradation." evidence="7">
    <original>E</original>
    <variation>A</variation>
    <location>
        <position position="563"/>
    </location>
</feature>
<feature type="mutagenesis site" description="Reduces regulated proteolytic degradation." evidence="7">
    <original>N</original>
    <variation>A</variation>
    <location>
        <position position="564"/>
    </location>
</feature>
<feature type="sequence conflict" description="In Ref. 1; AAF82564." evidence="8" ref="1">
    <original>H</original>
    <variation>Y</variation>
    <location>
        <position position="99"/>
    </location>
</feature>
<protein>
    <recommendedName>
        <fullName>Kinesin-like protein KIF22-A</fullName>
    </recommendedName>
    <alternativeName>
        <fullName>Chromokinesin kid-A</fullName>
        <shortName>Xkid-A</shortName>
    </alternativeName>
</protein>
<organism>
    <name type="scientific">Xenopus laevis</name>
    <name type="common">African clawed frog</name>
    <dbReference type="NCBI Taxonomy" id="8355"/>
    <lineage>
        <taxon>Eukaryota</taxon>
        <taxon>Metazoa</taxon>
        <taxon>Chordata</taxon>
        <taxon>Craniata</taxon>
        <taxon>Vertebrata</taxon>
        <taxon>Euteleostomi</taxon>
        <taxon>Amphibia</taxon>
        <taxon>Batrachia</taxon>
        <taxon>Anura</taxon>
        <taxon>Pipoidea</taxon>
        <taxon>Pipidae</taxon>
        <taxon>Xenopodinae</taxon>
        <taxon>Xenopus</taxon>
        <taxon>Xenopus</taxon>
    </lineage>
</organism>
<dbReference type="EMBL" id="AF267849">
    <property type="protein sequence ID" value="AAF82563.1"/>
    <property type="molecule type" value="mRNA"/>
</dbReference>
<dbReference type="EMBL" id="AF267850">
    <property type="protein sequence ID" value="AAF82564.1"/>
    <property type="molecule type" value="mRNA"/>
</dbReference>
<dbReference type="EMBL" id="AJ249840">
    <property type="protein sequence ID" value="CAB71798.1"/>
    <property type="molecule type" value="mRNA"/>
</dbReference>
<dbReference type="EMBL" id="BC070549">
    <property type="protein sequence ID" value="AAH70549.1"/>
    <property type="molecule type" value="mRNA"/>
</dbReference>
<dbReference type="RefSeq" id="NP_001165448.1">
    <property type="nucleotide sequence ID" value="NM_001171977.1"/>
</dbReference>
<dbReference type="SMR" id="Q9I869"/>
<dbReference type="GeneID" id="100337510"/>
<dbReference type="KEGG" id="xla:100337510"/>
<dbReference type="AGR" id="Xenbase:XB-GENE-979894"/>
<dbReference type="CTD" id="100337510"/>
<dbReference type="Xenbase" id="XB-GENE-979894">
    <property type="gene designation" value="kif22.S"/>
</dbReference>
<dbReference type="OrthoDB" id="3176171at2759"/>
<dbReference type="Proteomes" id="UP000186698">
    <property type="component" value="Chromosome 9_10S"/>
</dbReference>
<dbReference type="Bgee" id="100337510">
    <property type="expression patterns" value="Expressed in egg cell and 17 other cell types or tissues"/>
</dbReference>
<dbReference type="GO" id="GO:0005737">
    <property type="term" value="C:cytoplasm"/>
    <property type="evidence" value="ECO:0000318"/>
    <property type="project" value="GO_Central"/>
</dbReference>
<dbReference type="GO" id="GO:0005871">
    <property type="term" value="C:kinesin complex"/>
    <property type="evidence" value="ECO:0000318"/>
    <property type="project" value="GO_Central"/>
</dbReference>
<dbReference type="GO" id="GO:0005874">
    <property type="term" value="C:microtubule"/>
    <property type="evidence" value="ECO:0000318"/>
    <property type="project" value="GO_Central"/>
</dbReference>
<dbReference type="GO" id="GO:0005634">
    <property type="term" value="C:nucleus"/>
    <property type="evidence" value="ECO:0007669"/>
    <property type="project" value="UniProtKB-SubCell"/>
</dbReference>
<dbReference type="GO" id="GO:0005524">
    <property type="term" value="F:ATP binding"/>
    <property type="evidence" value="ECO:0007669"/>
    <property type="project" value="UniProtKB-KW"/>
</dbReference>
<dbReference type="GO" id="GO:0016887">
    <property type="term" value="F:ATP hydrolysis activity"/>
    <property type="evidence" value="ECO:0000318"/>
    <property type="project" value="GO_Central"/>
</dbReference>
<dbReference type="GO" id="GO:0003677">
    <property type="term" value="F:DNA binding"/>
    <property type="evidence" value="ECO:0007669"/>
    <property type="project" value="UniProtKB-KW"/>
</dbReference>
<dbReference type="GO" id="GO:0008017">
    <property type="term" value="F:microtubule binding"/>
    <property type="evidence" value="ECO:0000318"/>
    <property type="project" value="GO_Central"/>
</dbReference>
<dbReference type="GO" id="GO:0003777">
    <property type="term" value="F:microtubule motor activity"/>
    <property type="evidence" value="ECO:0000318"/>
    <property type="project" value="GO_Central"/>
</dbReference>
<dbReference type="GO" id="GO:0007018">
    <property type="term" value="P:microtubule-based movement"/>
    <property type="evidence" value="ECO:0000318"/>
    <property type="project" value="GO_Central"/>
</dbReference>
<dbReference type="GO" id="GO:0007052">
    <property type="term" value="P:mitotic spindle organization"/>
    <property type="evidence" value="ECO:0007669"/>
    <property type="project" value="TreeGrafter"/>
</dbReference>
<dbReference type="GO" id="GO:0051231">
    <property type="term" value="P:spindle elongation"/>
    <property type="evidence" value="ECO:0007669"/>
    <property type="project" value="TreeGrafter"/>
</dbReference>
<dbReference type="CDD" id="cd01376">
    <property type="entry name" value="KISc_KID_like"/>
    <property type="match status" value="1"/>
</dbReference>
<dbReference type="FunFam" id="1.10.150.280:FF:000002">
    <property type="entry name" value="Kinesin-like protein"/>
    <property type="match status" value="1"/>
</dbReference>
<dbReference type="FunFam" id="3.40.850.10:FF:000043">
    <property type="entry name" value="Kinesin-like protein"/>
    <property type="match status" value="1"/>
</dbReference>
<dbReference type="Gene3D" id="1.10.150.280">
    <property type="entry name" value="AF1531-like domain"/>
    <property type="match status" value="1"/>
</dbReference>
<dbReference type="Gene3D" id="3.40.850.10">
    <property type="entry name" value="Kinesin motor domain"/>
    <property type="match status" value="1"/>
</dbReference>
<dbReference type="InterPro" id="IPR027640">
    <property type="entry name" value="Kinesin-like_fam"/>
</dbReference>
<dbReference type="InterPro" id="IPR019821">
    <property type="entry name" value="Kinesin_motor_CS"/>
</dbReference>
<dbReference type="InterPro" id="IPR001752">
    <property type="entry name" value="Kinesin_motor_dom"/>
</dbReference>
<dbReference type="InterPro" id="IPR036961">
    <property type="entry name" value="Kinesin_motor_dom_sf"/>
</dbReference>
<dbReference type="InterPro" id="IPR027417">
    <property type="entry name" value="P-loop_NTPase"/>
</dbReference>
<dbReference type="InterPro" id="IPR010994">
    <property type="entry name" value="RuvA_2-like"/>
</dbReference>
<dbReference type="PANTHER" id="PTHR47969">
    <property type="entry name" value="CHROMOSOME-ASSOCIATED KINESIN KIF4A-RELATED"/>
    <property type="match status" value="1"/>
</dbReference>
<dbReference type="PANTHER" id="PTHR47969:SF9">
    <property type="entry name" value="KINESIN-LIKE PROTEIN"/>
    <property type="match status" value="1"/>
</dbReference>
<dbReference type="Pfam" id="PF12836">
    <property type="entry name" value="HHH_3"/>
    <property type="match status" value="1"/>
</dbReference>
<dbReference type="Pfam" id="PF00225">
    <property type="entry name" value="Kinesin"/>
    <property type="match status" value="1"/>
</dbReference>
<dbReference type="PRINTS" id="PR00380">
    <property type="entry name" value="KINESINHEAVY"/>
</dbReference>
<dbReference type="SMART" id="SM00129">
    <property type="entry name" value="KISc"/>
    <property type="match status" value="1"/>
</dbReference>
<dbReference type="SUPFAM" id="SSF52540">
    <property type="entry name" value="P-loop containing nucleoside triphosphate hydrolases"/>
    <property type="match status" value="1"/>
</dbReference>
<dbReference type="SUPFAM" id="SSF47781">
    <property type="entry name" value="RuvA domain 2-like"/>
    <property type="match status" value="1"/>
</dbReference>
<dbReference type="PROSITE" id="PS00411">
    <property type="entry name" value="KINESIN_MOTOR_1"/>
    <property type="match status" value="1"/>
</dbReference>
<dbReference type="PROSITE" id="PS50067">
    <property type="entry name" value="KINESIN_MOTOR_2"/>
    <property type="match status" value="1"/>
</dbReference>
<sequence length="651" mass="73066">MVLTGPLQRESVSMAKRVSMLDQHKKSSCARVRVAVRLRPYMDEKDEAKATTVCVRGLDSQSLEIVNWRNQLETMQYQFDAFYGDSASQREIYMGSVCHILPHLLIGQNASVFAYGPTGAGKTHTMLGNPNQPGVIPRAVRDLLQMSRTAASAPENENWTYTINMSYVEIYQEKVMDLLEPKNKDLPIREDKDHNILIPGVTQKMINSFADFDEHFIPASQNRTVASTKLNDRSSRSHAVLLIKVQKSQQVVPFRQLTGKLYLIDLAGSEDNRRTGNQGIRLKESGAINSSLFTLSKVVDALNQGLPRIPYRDSKLTRLLQDSLGGSAHSVMITNIAPEQTYYFDTLTALNFAAKSKQIINKPFSQETTQTVVQPAMKRPREETGHIAGSQKRKKSKNDSTESSPNSSMDTAGKQKLNLATLDPAVVERLLKLDKILTEKGKKKAQLLSTPKRERMALLKKWEESQMEIERLKEKQKELEQKAMEAEARLEKSNNSDLSDSSVSENTFRAPLRGRNTSTAKVKKVLRVLPMQGNSQLQSTVEEGIPVFEKKKKKKQVTCEGLENQPTWEMNMRTDLLESGKERILKLLNTGSVKELKSLQRIGDKKAKLIIGWREVNGPFKNVEELACLEGISAKQVSSFIKANIMSSIAS</sequence>
<reference key="1">
    <citation type="journal article" date="2000" name="Cell">
        <title>The Xenopus chromokinesin Xkid is essential for metaphase chromosome alignment and must be degraded to allow anaphase chromosome movement.</title>
        <authorList>
            <person name="Funabiki H."/>
            <person name="Murray A.W."/>
        </authorList>
    </citation>
    <scope>NUCLEOTIDE SEQUENCE [MRNA]</scope>
    <scope>FUNCTION</scope>
    <scope>SUBCELLULAR LOCATION</scope>
    <scope>UBIQUITINATION</scope>
    <scope>PROTEOLYTIC DEGRADATION</scope>
    <source>
        <tissue>Blastula</tissue>
    </source>
</reference>
<reference key="2">
    <citation type="journal article" date="2000" name="Cell">
        <title>Xkid, a chromokinesin required for chromosome alignment on the metaphase plate.</title>
        <authorList>
            <person name="Antonio C."/>
            <person name="Ferby I."/>
            <person name="Wilhelm H."/>
            <person name="Jones M."/>
            <person name="Karsenti E."/>
            <person name="Nebreda A.R."/>
            <person name="Vernos I."/>
        </authorList>
    </citation>
    <scope>NUCLEOTIDE SEQUENCE [MRNA]</scope>
    <scope>FUNCTION</scope>
    <scope>PROTEOLYTIC DEGRADATION</scope>
    <source>
        <tissue>Oocyte</tissue>
    </source>
</reference>
<reference key="3">
    <citation type="submission" date="2004-05" db="EMBL/GenBank/DDBJ databases">
        <authorList>
            <consortium name="NIH - Xenopus Gene Collection (XGC) project"/>
        </authorList>
    </citation>
    <scope>NUCLEOTIDE SEQUENCE [LARGE SCALE MRNA]</scope>
    <source>
        <tissue>Embryo</tissue>
    </source>
</reference>
<reference key="4">
    <citation type="journal article" date="2002" name="Nat. Cell Biol.">
        <title>Xkid chromokinesin is required for the meiosis I to meiosis II transition in Xenopus laevis oocytes.</title>
        <authorList>
            <person name="Perez L.H."/>
            <person name="Antonio C."/>
            <person name="Flament S."/>
            <person name="Vernos I."/>
            <person name="Nebreda A.R."/>
        </authorList>
    </citation>
    <scope>FUNCTION</scope>
</reference>
<reference key="5">
    <citation type="journal article" date="2003" name="Mol. Cell. Biol.">
        <title>Xkid is degraded in a D-box, KEN-box, and A-box-independent pathway.</title>
        <authorList>
            <person name="Castro A."/>
            <person name="Vigneron S."/>
            <person name="Bernis C."/>
            <person name="Labbe J.-C."/>
            <person name="Lorca T."/>
        </authorList>
    </citation>
    <scope>DEVELOPMENTAL STAGE</scope>
    <scope>PROTEOLYTIC DEGRADATION</scope>
    <scope>MUTAGENESIS OF GLY-561; LEU-562; GLU-563 AND ASN-564</scope>
</reference>
<keyword id="KW-0067">ATP-binding</keyword>
<keyword id="KW-0175">Coiled coil</keyword>
<keyword id="KW-0963">Cytoplasm</keyword>
<keyword id="KW-0206">Cytoskeleton</keyword>
<keyword id="KW-0238">DNA-binding</keyword>
<keyword id="KW-0493">Microtubule</keyword>
<keyword id="KW-0505">Motor protein</keyword>
<keyword id="KW-0547">Nucleotide-binding</keyword>
<keyword id="KW-0539">Nucleus</keyword>
<keyword id="KW-1185">Reference proteome</keyword>
<keyword id="KW-0832">Ubl conjugation</keyword>
<gene>
    <name type="primary">kif22-a</name>
    <name type="synonym">kid-a</name>
</gene>
<proteinExistence type="evidence at protein level"/>
<comment type="function">
    <text evidence="4 5 6">Kinesin family member that is involved in spindle formation and the movements of chromosomes during mitosis and meiosis. Binds to microtubules and to DNA.</text>
</comment>
<comment type="subcellular location">
    <subcellularLocation>
        <location evidence="4">Nucleus</location>
    </subcellularLocation>
    <subcellularLocation>
        <location evidence="9">Cytoplasm</location>
        <location evidence="9">Cytoskeleton</location>
    </subcellularLocation>
</comment>
<comment type="developmental stage">
    <text evidence="7">First detected at germinal vesicle breakdown in maturing oocytes (at protein level).</text>
</comment>
<comment type="PTM">
    <text evidence="4">Ubiquitinated, leading to its subsequent proteasomal degradation.</text>
</comment>
<comment type="similarity">
    <text evidence="2">Belongs to the TRAFAC class myosin-kinesin ATPase superfamily. Kinesin family.</text>
</comment>
<name>KF22A_XENLA</name>